<reference key="1">
    <citation type="journal article" date="1965" name="Acta Chem. Scand.">
        <title>Studies on fibrinopeptides from mammals.</title>
        <authorList>
            <person name="Blombaeck B."/>
            <person name="Blombaeck M."/>
            <person name="Grondahl N.J."/>
        </authorList>
    </citation>
    <scope>PROTEIN SEQUENCE</scope>
    <scope>SULFATION AT TYR-5</scope>
</reference>
<comment type="function">
    <text evidence="1">Cleaved by the protease thrombin to yield monomers which, together with fibrinogen alpha (FGA) and fibrinogen gamma (FGG), polymerize to form an insoluble fibrin matrix. Fibrin has a major function in hemostasis as one of the primary components of blood clots. In addition, functions during the early stages of wound repair to stabilize the lesion and guide cell migration during re-epithelialization. Was originally thought to be essential for platelet aggregation, based on in vitro studies using anticoagulated blood. However subsequent studies have shown that it is not absolutely required for thrombus formation in vivo. Enhances expression of SELP in activated platelets. Maternal fibrinogen is essential for successful pregnancy. Fibrin deposition is also associated with infection, where it protects against IFNG-mediated hemorrhage. May also facilitate the antibacterial immune response via both innate and T-cell mediated pathways.</text>
</comment>
<comment type="subunit">
    <text evidence="2">Heterohexamer; disulfide linked. Contains 2 sets of 3 non-identical chains (alpha, beta and gamma). The 2 heterotrimers are in head to head conformation with the N-termini in a small central domain (By similarity).</text>
</comment>
<comment type="subcellular location">
    <subcellularLocation>
        <location>Secreted</location>
    </subcellularLocation>
</comment>
<comment type="domain">
    <text evidence="2">A long coiled coil structure formed by 3 polypeptide chains connects the central nodule to the C-terminal domains (distal nodules). The long C-terminal ends of the alpha chains fold back, contributing a fourth strand to the coiled coil structure.</text>
</comment>
<comment type="PTM">
    <text>Conversion of fibrinogen to fibrin is triggered by thrombin, which cleaves fibrinopeptides A and B from alpha and beta chains, and thus exposes the N-terminal polymerization sites responsible for the formation of the soft clot.</text>
</comment>
<dbReference type="STRING" id="9925.ENSCHIP00000013588"/>
<dbReference type="Proteomes" id="UP000291000">
    <property type="component" value="Unassembled WGS sequence"/>
</dbReference>
<dbReference type="Proteomes" id="UP000694566">
    <property type="component" value="Unplaced"/>
</dbReference>
<dbReference type="GO" id="GO:0005576">
    <property type="term" value="C:extracellular region"/>
    <property type="evidence" value="ECO:0007669"/>
    <property type="project" value="UniProtKB-SubCell"/>
</dbReference>
<dbReference type="GO" id="GO:0002250">
    <property type="term" value="P:adaptive immune response"/>
    <property type="evidence" value="ECO:0007669"/>
    <property type="project" value="UniProtKB-KW"/>
</dbReference>
<dbReference type="GO" id="GO:0007596">
    <property type="term" value="P:blood coagulation"/>
    <property type="evidence" value="ECO:0007669"/>
    <property type="project" value="UniProtKB-KW"/>
</dbReference>
<dbReference type="GO" id="GO:0045087">
    <property type="term" value="P:innate immune response"/>
    <property type="evidence" value="ECO:0007669"/>
    <property type="project" value="UniProtKB-KW"/>
</dbReference>
<gene>
    <name type="primary">FGB</name>
</gene>
<proteinExistence type="evidence at protein level"/>
<name>FIBB_CAPHI</name>
<organism>
    <name type="scientific">Capra hircus</name>
    <name type="common">Goat</name>
    <dbReference type="NCBI Taxonomy" id="9925"/>
    <lineage>
        <taxon>Eukaryota</taxon>
        <taxon>Metazoa</taxon>
        <taxon>Chordata</taxon>
        <taxon>Craniata</taxon>
        <taxon>Vertebrata</taxon>
        <taxon>Euteleostomi</taxon>
        <taxon>Mammalia</taxon>
        <taxon>Eutheria</taxon>
        <taxon>Laurasiatheria</taxon>
        <taxon>Artiodactyla</taxon>
        <taxon>Ruminantia</taxon>
        <taxon>Pecora</taxon>
        <taxon>Bovidae</taxon>
        <taxon>Caprinae</taxon>
        <taxon>Capra</taxon>
    </lineage>
</organism>
<feature type="peptide" id="PRO_0000009061" description="Fibrinopeptide B">
    <location>
        <begin position="1"/>
        <end position="20"/>
    </location>
</feature>
<feature type="modified residue" description="Sulfotyrosine" evidence="3">
    <location>
        <position position="5"/>
    </location>
</feature>
<feature type="non-terminal residue">
    <location>
        <position position="20"/>
    </location>
</feature>
<keyword id="KW-1064">Adaptive immunity</keyword>
<keyword id="KW-0094">Blood coagulation</keyword>
<keyword id="KW-0175">Coiled coil</keyword>
<keyword id="KW-0903">Direct protein sequencing</keyword>
<keyword id="KW-1015">Disulfide bond</keyword>
<keyword id="KW-0356">Hemostasis</keyword>
<keyword id="KW-0391">Immunity</keyword>
<keyword id="KW-0399">Innate immunity</keyword>
<keyword id="KW-1185">Reference proteome</keyword>
<keyword id="KW-0964">Secreted</keyword>
<keyword id="KW-0765">Sulfation</keyword>
<sequence>GYLDYDEVDDNRAKLPLDAR</sequence>
<accession>P68117</accession>
<accession>P14470</accession>
<protein>
    <recommendedName>
        <fullName>Fibrinogen beta chain</fullName>
    </recommendedName>
    <component>
        <recommendedName>
            <fullName>Fibrinopeptide B</fullName>
        </recommendedName>
    </component>
</protein>
<evidence type="ECO:0000250" key="1">
    <source>
        <dbReference type="UniProtKB" id="E9PV24"/>
    </source>
</evidence>
<evidence type="ECO:0000250" key="2">
    <source>
        <dbReference type="UniProtKB" id="P02675"/>
    </source>
</evidence>
<evidence type="ECO:0000269" key="3">
    <source ref="1"/>
</evidence>